<organism>
    <name type="scientific">Desulfitobacterium hafniense (strain Y51)</name>
    <dbReference type="NCBI Taxonomy" id="138119"/>
    <lineage>
        <taxon>Bacteria</taxon>
        <taxon>Bacillati</taxon>
        <taxon>Bacillota</taxon>
        <taxon>Clostridia</taxon>
        <taxon>Eubacteriales</taxon>
        <taxon>Desulfitobacteriaceae</taxon>
        <taxon>Desulfitobacterium</taxon>
    </lineage>
</organism>
<gene>
    <name evidence="1" type="primary">serS</name>
    <name type="ordered locus">DSY0008</name>
</gene>
<evidence type="ECO:0000255" key="1">
    <source>
        <dbReference type="HAMAP-Rule" id="MF_00176"/>
    </source>
</evidence>
<accession>Q252J5</accession>
<name>SYS_DESHY</name>
<sequence>MLDLKFVRTNPEVVKEALKKRNSNVSLDAFLEQEEERRKLLFEVESLKAKRNTVSEEVGRRKKHGEDAEQLILEMREVGQKVKNLEDKLGEIEQSMEAVLYEIPNIPHESVPVGADEEANVEVRTWGTPRSFDFEPLAHYEIGEKLDILDFARAGKVTGARFTFYKGLGAKLERALISFMLDRHSAKGYVEVLPPYMVHRNSMIGTGQLPKFEEDAFKVAGTDYFLIPTAEVPVTNMYREEILEAEQLPIHHCAYSACFRAEAGSAGRDTRGLIRQHQFNKVELVKFAFPENSYEELESLTRDAESILQELELPYRVMALSTGDLGFTSAKTYDLEVWLPSFNTYREISSCSNFEDFQARRANIRFRRAPKAKPEFLHTLNGSGLAIGRTVSAILENYQEADGRVRVPKALQPYLGVEYIG</sequence>
<comment type="function">
    <text evidence="1">Catalyzes the attachment of serine to tRNA(Ser). Is also able to aminoacylate tRNA(Sec) with serine, to form the misacylated tRNA L-seryl-tRNA(Sec), which will be further converted into selenocysteinyl-tRNA(Sec).</text>
</comment>
<comment type="catalytic activity">
    <reaction evidence="1">
        <text>tRNA(Ser) + L-serine + ATP = L-seryl-tRNA(Ser) + AMP + diphosphate + H(+)</text>
        <dbReference type="Rhea" id="RHEA:12292"/>
        <dbReference type="Rhea" id="RHEA-COMP:9669"/>
        <dbReference type="Rhea" id="RHEA-COMP:9703"/>
        <dbReference type="ChEBI" id="CHEBI:15378"/>
        <dbReference type="ChEBI" id="CHEBI:30616"/>
        <dbReference type="ChEBI" id="CHEBI:33019"/>
        <dbReference type="ChEBI" id="CHEBI:33384"/>
        <dbReference type="ChEBI" id="CHEBI:78442"/>
        <dbReference type="ChEBI" id="CHEBI:78533"/>
        <dbReference type="ChEBI" id="CHEBI:456215"/>
        <dbReference type="EC" id="6.1.1.11"/>
    </reaction>
</comment>
<comment type="catalytic activity">
    <reaction evidence="1">
        <text>tRNA(Sec) + L-serine + ATP = L-seryl-tRNA(Sec) + AMP + diphosphate + H(+)</text>
        <dbReference type="Rhea" id="RHEA:42580"/>
        <dbReference type="Rhea" id="RHEA-COMP:9742"/>
        <dbReference type="Rhea" id="RHEA-COMP:10128"/>
        <dbReference type="ChEBI" id="CHEBI:15378"/>
        <dbReference type="ChEBI" id="CHEBI:30616"/>
        <dbReference type="ChEBI" id="CHEBI:33019"/>
        <dbReference type="ChEBI" id="CHEBI:33384"/>
        <dbReference type="ChEBI" id="CHEBI:78442"/>
        <dbReference type="ChEBI" id="CHEBI:78533"/>
        <dbReference type="ChEBI" id="CHEBI:456215"/>
        <dbReference type="EC" id="6.1.1.11"/>
    </reaction>
</comment>
<comment type="pathway">
    <text evidence="1">Aminoacyl-tRNA biosynthesis; selenocysteinyl-tRNA(Sec) biosynthesis; L-seryl-tRNA(Sec) from L-serine and tRNA(Sec): step 1/1.</text>
</comment>
<comment type="subunit">
    <text evidence="1">Homodimer. The tRNA molecule binds across the dimer.</text>
</comment>
<comment type="subcellular location">
    <subcellularLocation>
        <location evidence="1">Cytoplasm</location>
    </subcellularLocation>
</comment>
<comment type="domain">
    <text evidence="1">Consists of two distinct domains, a catalytic core and a N-terminal extension that is involved in tRNA binding.</text>
</comment>
<comment type="similarity">
    <text evidence="1">Belongs to the class-II aminoacyl-tRNA synthetase family. Type-1 seryl-tRNA synthetase subfamily.</text>
</comment>
<protein>
    <recommendedName>
        <fullName evidence="1">Serine--tRNA ligase</fullName>
        <ecNumber evidence="1">6.1.1.11</ecNumber>
    </recommendedName>
    <alternativeName>
        <fullName evidence="1">Seryl-tRNA synthetase</fullName>
        <shortName evidence="1">SerRS</shortName>
    </alternativeName>
    <alternativeName>
        <fullName evidence="1">Seryl-tRNA(Ser/Sec) synthetase</fullName>
    </alternativeName>
</protein>
<proteinExistence type="inferred from homology"/>
<dbReference type="EC" id="6.1.1.11" evidence="1"/>
<dbReference type="EMBL" id="AP008230">
    <property type="protein sequence ID" value="BAE81797.1"/>
    <property type="molecule type" value="Genomic_DNA"/>
</dbReference>
<dbReference type="RefSeq" id="WP_011458807.1">
    <property type="nucleotide sequence ID" value="NC_007907.1"/>
</dbReference>
<dbReference type="SMR" id="Q252J5"/>
<dbReference type="STRING" id="138119.DSY0008"/>
<dbReference type="KEGG" id="dsy:DSY0008"/>
<dbReference type="eggNOG" id="COG0172">
    <property type="taxonomic scope" value="Bacteria"/>
</dbReference>
<dbReference type="HOGENOM" id="CLU_023797_1_1_9"/>
<dbReference type="UniPathway" id="UPA00906">
    <property type="reaction ID" value="UER00895"/>
</dbReference>
<dbReference type="Proteomes" id="UP000001946">
    <property type="component" value="Chromosome"/>
</dbReference>
<dbReference type="GO" id="GO:0005737">
    <property type="term" value="C:cytoplasm"/>
    <property type="evidence" value="ECO:0007669"/>
    <property type="project" value="UniProtKB-SubCell"/>
</dbReference>
<dbReference type="GO" id="GO:0005524">
    <property type="term" value="F:ATP binding"/>
    <property type="evidence" value="ECO:0007669"/>
    <property type="project" value="UniProtKB-UniRule"/>
</dbReference>
<dbReference type="GO" id="GO:0140096">
    <property type="term" value="F:catalytic activity, acting on a protein"/>
    <property type="evidence" value="ECO:0007669"/>
    <property type="project" value="UniProtKB-ARBA"/>
</dbReference>
<dbReference type="GO" id="GO:0004828">
    <property type="term" value="F:serine-tRNA ligase activity"/>
    <property type="evidence" value="ECO:0007669"/>
    <property type="project" value="UniProtKB-UniRule"/>
</dbReference>
<dbReference type="GO" id="GO:0016740">
    <property type="term" value="F:transferase activity"/>
    <property type="evidence" value="ECO:0007669"/>
    <property type="project" value="UniProtKB-ARBA"/>
</dbReference>
<dbReference type="GO" id="GO:0016260">
    <property type="term" value="P:selenocysteine biosynthetic process"/>
    <property type="evidence" value="ECO:0007669"/>
    <property type="project" value="UniProtKB-UniRule"/>
</dbReference>
<dbReference type="GO" id="GO:0006434">
    <property type="term" value="P:seryl-tRNA aminoacylation"/>
    <property type="evidence" value="ECO:0007669"/>
    <property type="project" value="UniProtKB-UniRule"/>
</dbReference>
<dbReference type="CDD" id="cd00770">
    <property type="entry name" value="SerRS_core"/>
    <property type="match status" value="1"/>
</dbReference>
<dbReference type="Gene3D" id="3.30.930.10">
    <property type="entry name" value="Bira Bifunctional Protein, Domain 2"/>
    <property type="match status" value="1"/>
</dbReference>
<dbReference type="Gene3D" id="1.10.287.40">
    <property type="entry name" value="Serine-tRNA synthetase, tRNA binding domain"/>
    <property type="match status" value="1"/>
</dbReference>
<dbReference type="HAMAP" id="MF_00176">
    <property type="entry name" value="Ser_tRNA_synth_type1"/>
    <property type="match status" value="1"/>
</dbReference>
<dbReference type="InterPro" id="IPR002314">
    <property type="entry name" value="aa-tRNA-synt_IIb"/>
</dbReference>
<dbReference type="InterPro" id="IPR006195">
    <property type="entry name" value="aa-tRNA-synth_II"/>
</dbReference>
<dbReference type="InterPro" id="IPR045864">
    <property type="entry name" value="aa-tRNA-synth_II/BPL/LPL"/>
</dbReference>
<dbReference type="InterPro" id="IPR002317">
    <property type="entry name" value="Ser-tRNA-ligase_type_1"/>
</dbReference>
<dbReference type="InterPro" id="IPR015866">
    <property type="entry name" value="Ser-tRNA-synth_1_N"/>
</dbReference>
<dbReference type="InterPro" id="IPR042103">
    <property type="entry name" value="SerRS_1_N_sf"/>
</dbReference>
<dbReference type="InterPro" id="IPR033729">
    <property type="entry name" value="SerRS_core"/>
</dbReference>
<dbReference type="InterPro" id="IPR010978">
    <property type="entry name" value="tRNA-bd_arm"/>
</dbReference>
<dbReference type="NCBIfam" id="TIGR00414">
    <property type="entry name" value="serS"/>
    <property type="match status" value="1"/>
</dbReference>
<dbReference type="PANTHER" id="PTHR43697:SF1">
    <property type="entry name" value="SERINE--TRNA LIGASE"/>
    <property type="match status" value="1"/>
</dbReference>
<dbReference type="PANTHER" id="PTHR43697">
    <property type="entry name" value="SERYL-TRNA SYNTHETASE"/>
    <property type="match status" value="1"/>
</dbReference>
<dbReference type="Pfam" id="PF02403">
    <property type="entry name" value="Seryl_tRNA_N"/>
    <property type="match status" value="1"/>
</dbReference>
<dbReference type="Pfam" id="PF00587">
    <property type="entry name" value="tRNA-synt_2b"/>
    <property type="match status" value="1"/>
</dbReference>
<dbReference type="PIRSF" id="PIRSF001529">
    <property type="entry name" value="Ser-tRNA-synth_IIa"/>
    <property type="match status" value="1"/>
</dbReference>
<dbReference type="PRINTS" id="PR00981">
    <property type="entry name" value="TRNASYNTHSER"/>
</dbReference>
<dbReference type="SUPFAM" id="SSF55681">
    <property type="entry name" value="Class II aaRS and biotin synthetases"/>
    <property type="match status" value="1"/>
</dbReference>
<dbReference type="SUPFAM" id="SSF46589">
    <property type="entry name" value="tRNA-binding arm"/>
    <property type="match status" value="1"/>
</dbReference>
<dbReference type="PROSITE" id="PS50862">
    <property type="entry name" value="AA_TRNA_LIGASE_II"/>
    <property type="match status" value="1"/>
</dbReference>
<feature type="chain" id="PRO_1000019670" description="Serine--tRNA ligase">
    <location>
        <begin position="1"/>
        <end position="421"/>
    </location>
</feature>
<feature type="binding site" evidence="1">
    <location>
        <begin position="229"/>
        <end position="231"/>
    </location>
    <ligand>
        <name>L-serine</name>
        <dbReference type="ChEBI" id="CHEBI:33384"/>
    </ligand>
</feature>
<feature type="binding site" evidence="1">
    <location>
        <begin position="260"/>
        <end position="262"/>
    </location>
    <ligand>
        <name>ATP</name>
        <dbReference type="ChEBI" id="CHEBI:30616"/>
    </ligand>
</feature>
<feature type="binding site" evidence="1">
    <location>
        <position position="283"/>
    </location>
    <ligand>
        <name>L-serine</name>
        <dbReference type="ChEBI" id="CHEBI:33384"/>
    </ligand>
</feature>
<feature type="binding site" evidence="1">
    <location>
        <begin position="347"/>
        <end position="350"/>
    </location>
    <ligand>
        <name>ATP</name>
        <dbReference type="ChEBI" id="CHEBI:30616"/>
    </ligand>
</feature>
<feature type="binding site" evidence="1">
    <location>
        <position position="383"/>
    </location>
    <ligand>
        <name>L-serine</name>
        <dbReference type="ChEBI" id="CHEBI:33384"/>
    </ligand>
</feature>
<reference key="1">
    <citation type="journal article" date="2006" name="J. Bacteriol.">
        <title>Complete genome sequence of the dehalorespiring bacterium Desulfitobacterium hafniense Y51 and comparison with Dehalococcoides ethenogenes 195.</title>
        <authorList>
            <person name="Nonaka H."/>
            <person name="Keresztes G."/>
            <person name="Shinoda Y."/>
            <person name="Ikenaga Y."/>
            <person name="Abe M."/>
            <person name="Naito K."/>
            <person name="Inatomi K."/>
            <person name="Furukawa K."/>
            <person name="Inui M."/>
            <person name="Yukawa H."/>
        </authorList>
    </citation>
    <scope>NUCLEOTIDE SEQUENCE [LARGE SCALE GENOMIC DNA]</scope>
    <source>
        <strain>Y51</strain>
    </source>
</reference>
<keyword id="KW-0030">Aminoacyl-tRNA synthetase</keyword>
<keyword id="KW-0067">ATP-binding</keyword>
<keyword id="KW-0963">Cytoplasm</keyword>
<keyword id="KW-0436">Ligase</keyword>
<keyword id="KW-0547">Nucleotide-binding</keyword>
<keyword id="KW-0648">Protein biosynthesis</keyword>
<keyword id="KW-1185">Reference proteome</keyword>